<reference key="1">
    <citation type="submission" date="2008-10" db="EMBL/GenBank/DDBJ databases">
        <title>Genome sequence of Bacillus cereus AH187.</title>
        <authorList>
            <person name="Dodson R.J."/>
            <person name="Durkin A.S."/>
            <person name="Rosovitz M.J."/>
            <person name="Rasko D.A."/>
            <person name="Kolsto A.B."/>
            <person name="Okstad O.A."/>
            <person name="Ravel J."/>
            <person name="Sutton G."/>
        </authorList>
    </citation>
    <scope>NUCLEOTIDE SEQUENCE [LARGE SCALE GENOMIC DNA]</scope>
    <source>
        <strain>AH187</strain>
    </source>
</reference>
<organism>
    <name type="scientific">Bacillus cereus (strain AH187)</name>
    <dbReference type="NCBI Taxonomy" id="405534"/>
    <lineage>
        <taxon>Bacteria</taxon>
        <taxon>Bacillati</taxon>
        <taxon>Bacillota</taxon>
        <taxon>Bacilli</taxon>
        <taxon>Bacillales</taxon>
        <taxon>Bacillaceae</taxon>
        <taxon>Bacillus</taxon>
        <taxon>Bacillus cereus group</taxon>
    </lineage>
</organism>
<comment type="function">
    <text evidence="1">DNA ligase that catalyzes the formation of phosphodiester linkages between 5'-phosphoryl and 3'-hydroxyl groups in double-stranded DNA using NAD as a coenzyme and as the energy source for the reaction. It is essential for DNA replication and repair of damaged DNA.</text>
</comment>
<comment type="catalytic activity">
    <reaction evidence="1">
        <text>NAD(+) + (deoxyribonucleotide)n-3'-hydroxyl + 5'-phospho-(deoxyribonucleotide)m = (deoxyribonucleotide)n+m + AMP + beta-nicotinamide D-nucleotide.</text>
        <dbReference type="EC" id="6.5.1.2"/>
    </reaction>
</comment>
<comment type="cofactor">
    <cofactor evidence="1">
        <name>Mg(2+)</name>
        <dbReference type="ChEBI" id="CHEBI:18420"/>
    </cofactor>
    <cofactor evidence="1">
        <name>Mn(2+)</name>
        <dbReference type="ChEBI" id="CHEBI:29035"/>
    </cofactor>
</comment>
<comment type="similarity">
    <text evidence="1">Belongs to the NAD-dependent DNA ligase family. LigA subfamily.</text>
</comment>
<name>DNLJ_BACC7</name>
<proteinExistence type="inferred from homology"/>
<accession>B7HSW5</accession>
<dbReference type="EC" id="6.5.1.2" evidence="1"/>
<dbReference type="EMBL" id="CP001177">
    <property type="protein sequence ID" value="ACJ78426.1"/>
    <property type="molecule type" value="Genomic_DNA"/>
</dbReference>
<dbReference type="SMR" id="B7HSW5"/>
<dbReference type="KEGG" id="bcr:BCAH187_A0378"/>
<dbReference type="HOGENOM" id="CLU_007764_2_1_9"/>
<dbReference type="Proteomes" id="UP000002214">
    <property type="component" value="Chromosome"/>
</dbReference>
<dbReference type="GO" id="GO:0005829">
    <property type="term" value="C:cytosol"/>
    <property type="evidence" value="ECO:0007669"/>
    <property type="project" value="TreeGrafter"/>
</dbReference>
<dbReference type="GO" id="GO:0003677">
    <property type="term" value="F:DNA binding"/>
    <property type="evidence" value="ECO:0007669"/>
    <property type="project" value="InterPro"/>
</dbReference>
<dbReference type="GO" id="GO:0003911">
    <property type="term" value="F:DNA ligase (NAD+) activity"/>
    <property type="evidence" value="ECO:0007669"/>
    <property type="project" value="UniProtKB-UniRule"/>
</dbReference>
<dbReference type="GO" id="GO:0046872">
    <property type="term" value="F:metal ion binding"/>
    <property type="evidence" value="ECO:0007669"/>
    <property type="project" value="UniProtKB-KW"/>
</dbReference>
<dbReference type="GO" id="GO:0006281">
    <property type="term" value="P:DNA repair"/>
    <property type="evidence" value="ECO:0007669"/>
    <property type="project" value="UniProtKB-KW"/>
</dbReference>
<dbReference type="GO" id="GO:0006260">
    <property type="term" value="P:DNA replication"/>
    <property type="evidence" value="ECO:0007669"/>
    <property type="project" value="UniProtKB-KW"/>
</dbReference>
<dbReference type="CDD" id="cd17748">
    <property type="entry name" value="BRCT_DNA_ligase_like"/>
    <property type="match status" value="1"/>
</dbReference>
<dbReference type="CDD" id="cd00114">
    <property type="entry name" value="LIGANc"/>
    <property type="match status" value="1"/>
</dbReference>
<dbReference type="FunFam" id="1.10.150.20:FF:000006">
    <property type="entry name" value="DNA ligase"/>
    <property type="match status" value="1"/>
</dbReference>
<dbReference type="FunFam" id="1.10.150.20:FF:000007">
    <property type="entry name" value="DNA ligase"/>
    <property type="match status" value="1"/>
</dbReference>
<dbReference type="FunFam" id="1.10.287.610:FF:000002">
    <property type="entry name" value="DNA ligase"/>
    <property type="match status" value="1"/>
</dbReference>
<dbReference type="FunFam" id="2.40.50.140:FF:000012">
    <property type="entry name" value="DNA ligase"/>
    <property type="match status" value="1"/>
</dbReference>
<dbReference type="FunFam" id="3.30.470.30:FF:000001">
    <property type="entry name" value="DNA ligase"/>
    <property type="match status" value="1"/>
</dbReference>
<dbReference type="FunFam" id="3.40.50.10190:FF:000026">
    <property type="entry name" value="DNA ligase"/>
    <property type="match status" value="1"/>
</dbReference>
<dbReference type="FunFam" id="6.20.10.30:FF:000002">
    <property type="entry name" value="DNA ligase"/>
    <property type="match status" value="1"/>
</dbReference>
<dbReference type="Gene3D" id="6.20.10.30">
    <property type="match status" value="1"/>
</dbReference>
<dbReference type="Gene3D" id="1.10.150.20">
    <property type="entry name" value="5' to 3' exonuclease, C-terminal subdomain"/>
    <property type="match status" value="2"/>
</dbReference>
<dbReference type="Gene3D" id="3.40.50.10190">
    <property type="entry name" value="BRCT domain"/>
    <property type="match status" value="1"/>
</dbReference>
<dbReference type="Gene3D" id="3.30.470.30">
    <property type="entry name" value="DNA ligase/mRNA capping enzyme"/>
    <property type="match status" value="1"/>
</dbReference>
<dbReference type="Gene3D" id="1.10.287.610">
    <property type="entry name" value="Helix hairpin bin"/>
    <property type="match status" value="1"/>
</dbReference>
<dbReference type="Gene3D" id="2.40.50.140">
    <property type="entry name" value="Nucleic acid-binding proteins"/>
    <property type="match status" value="1"/>
</dbReference>
<dbReference type="HAMAP" id="MF_01588">
    <property type="entry name" value="DNA_ligase_A"/>
    <property type="match status" value="1"/>
</dbReference>
<dbReference type="InterPro" id="IPR001357">
    <property type="entry name" value="BRCT_dom"/>
</dbReference>
<dbReference type="InterPro" id="IPR036420">
    <property type="entry name" value="BRCT_dom_sf"/>
</dbReference>
<dbReference type="InterPro" id="IPR041663">
    <property type="entry name" value="DisA/LigA_HHH"/>
</dbReference>
<dbReference type="InterPro" id="IPR001679">
    <property type="entry name" value="DNA_ligase"/>
</dbReference>
<dbReference type="InterPro" id="IPR018239">
    <property type="entry name" value="DNA_ligase_AS"/>
</dbReference>
<dbReference type="InterPro" id="IPR033136">
    <property type="entry name" value="DNA_ligase_CS"/>
</dbReference>
<dbReference type="InterPro" id="IPR013839">
    <property type="entry name" value="DNAligase_adenylation"/>
</dbReference>
<dbReference type="InterPro" id="IPR013840">
    <property type="entry name" value="DNAligase_N"/>
</dbReference>
<dbReference type="InterPro" id="IPR003583">
    <property type="entry name" value="Hlx-hairpin-Hlx_DNA-bd_motif"/>
</dbReference>
<dbReference type="InterPro" id="IPR012340">
    <property type="entry name" value="NA-bd_OB-fold"/>
</dbReference>
<dbReference type="InterPro" id="IPR004150">
    <property type="entry name" value="NAD_DNA_ligase_OB"/>
</dbReference>
<dbReference type="InterPro" id="IPR010994">
    <property type="entry name" value="RuvA_2-like"/>
</dbReference>
<dbReference type="InterPro" id="IPR004149">
    <property type="entry name" value="Znf_DNAligase_C4"/>
</dbReference>
<dbReference type="NCBIfam" id="TIGR00575">
    <property type="entry name" value="dnlj"/>
    <property type="match status" value="1"/>
</dbReference>
<dbReference type="NCBIfam" id="NF005932">
    <property type="entry name" value="PRK07956.1"/>
    <property type="match status" value="1"/>
</dbReference>
<dbReference type="PANTHER" id="PTHR23389">
    <property type="entry name" value="CHROMOSOME TRANSMISSION FIDELITY FACTOR 18"/>
    <property type="match status" value="1"/>
</dbReference>
<dbReference type="PANTHER" id="PTHR23389:SF9">
    <property type="entry name" value="DNA LIGASE"/>
    <property type="match status" value="1"/>
</dbReference>
<dbReference type="Pfam" id="PF00533">
    <property type="entry name" value="BRCT"/>
    <property type="match status" value="1"/>
</dbReference>
<dbReference type="Pfam" id="PF01653">
    <property type="entry name" value="DNA_ligase_aden"/>
    <property type="match status" value="1"/>
</dbReference>
<dbReference type="Pfam" id="PF03120">
    <property type="entry name" value="DNA_ligase_OB"/>
    <property type="match status" value="1"/>
</dbReference>
<dbReference type="Pfam" id="PF03119">
    <property type="entry name" value="DNA_ligase_ZBD"/>
    <property type="match status" value="1"/>
</dbReference>
<dbReference type="Pfam" id="PF12826">
    <property type="entry name" value="HHH_2"/>
    <property type="match status" value="1"/>
</dbReference>
<dbReference type="Pfam" id="PF14520">
    <property type="entry name" value="HHH_5"/>
    <property type="match status" value="1"/>
</dbReference>
<dbReference type="Pfam" id="PF22745">
    <property type="entry name" value="Nlig-Ia"/>
    <property type="match status" value="1"/>
</dbReference>
<dbReference type="PIRSF" id="PIRSF001604">
    <property type="entry name" value="LigA"/>
    <property type="match status" value="1"/>
</dbReference>
<dbReference type="SMART" id="SM00292">
    <property type="entry name" value="BRCT"/>
    <property type="match status" value="1"/>
</dbReference>
<dbReference type="SMART" id="SM00278">
    <property type="entry name" value="HhH1"/>
    <property type="match status" value="3"/>
</dbReference>
<dbReference type="SMART" id="SM00532">
    <property type="entry name" value="LIGANc"/>
    <property type="match status" value="1"/>
</dbReference>
<dbReference type="SUPFAM" id="SSF52113">
    <property type="entry name" value="BRCT domain"/>
    <property type="match status" value="1"/>
</dbReference>
<dbReference type="SUPFAM" id="SSF56091">
    <property type="entry name" value="DNA ligase/mRNA capping enzyme, catalytic domain"/>
    <property type="match status" value="1"/>
</dbReference>
<dbReference type="SUPFAM" id="SSF50249">
    <property type="entry name" value="Nucleic acid-binding proteins"/>
    <property type="match status" value="1"/>
</dbReference>
<dbReference type="SUPFAM" id="SSF47781">
    <property type="entry name" value="RuvA domain 2-like"/>
    <property type="match status" value="1"/>
</dbReference>
<dbReference type="PROSITE" id="PS50172">
    <property type="entry name" value="BRCT"/>
    <property type="match status" value="1"/>
</dbReference>
<dbReference type="PROSITE" id="PS01055">
    <property type="entry name" value="DNA_LIGASE_N1"/>
    <property type="match status" value="1"/>
</dbReference>
<dbReference type="PROSITE" id="PS01056">
    <property type="entry name" value="DNA_LIGASE_N2"/>
    <property type="match status" value="1"/>
</dbReference>
<evidence type="ECO:0000255" key="1">
    <source>
        <dbReference type="HAMAP-Rule" id="MF_01588"/>
    </source>
</evidence>
<protein>
    <recommendedName>
        <fullName evidence="1">DNA ligase</fullName>
        <ecNumber evidence="1">6.5.1.2</ecNumber>
    </recommendedName>
    <alternativeName>
        <fullName evidence="1">Polydeoxyribonucleotide synthase [NAD(+)]</fullName>
    </alternativeName>
</protein>
<sequence length="669" mass="75200">MSKEIAKKRIEELRDLLNTFNYQYHVLDNPSVSDAEYDRNMQELIKLEAENPEFMSEDSPSVRVGGTVLDIFEKVTHKSPMLSLGNAFNEGDLRDFDRRVRQGIDDANVRYICELKIDGLAVSLHYEKGRFIQGATRGDGVTGEDITQNLKTIKAIPLRLNEEVTLEARGEAYMPKRSFVKLNEEKEQNGEDVFANPRNAAAGSIRQLDPKIAAKRNLSMFVYGLANVEEKTILSHSESLDFLGELGFKTNPNRRTCETIEEVIAYVEEWQEKRPHLDYEIDGIVIKVDDVALQESLGTTAKSPRWAIAYKFPAEEVVTRLTGIELSVGRTGVVTPTAELEPVRVAGTIVRRASLHNEDLIREKDIRIGDYVVVKKAGDIIPEVVNVLFDKRTGEEEEYHMPTHCPACESELVRLEEEVALRCINPTCPAQIREGLIHFVSRNAMNIDGLGERVITQLFEADYIRTFADLYSLTKEQLLQLERFGEKSATNLVQAIENSKENSLERLLFGLGIRHVGAKAARTFAEHFETMDALVKATEEELKAINEIGEKMAQSVVAYFDNEDVLELLQQFKEYGVNMTYKGMKIADLQNVESYFAGKTVVLTGKLEVMGRSEAKKKIEALGGKVTGSVSKSTDLVVAGEAAGSKLAQAEKHNVEVWNEERFLQELNK</sequence>
<feature type="chain" id="PRO_0000380303" description="DNA ligase">
    <location>
        <begin position="1"/>
        <end position="669"/>
    </location>
</feature>
<feature type="domain" description="BRCT" evidence="1">
    <location>
        <begin position="591"/>
        <end position="669"/>
    </location>
</feature>
<feature type="active site" description="N6-AMP-lysine intermediate" evidence="1">
    <location>
        <position position="116"/>
    </location>
</feature>
<feature type="binding site" evidence="1">
    <location>
        <begin position="34"/>
        <end position="38"/>
    </location>
    <ligand>
        <name>NAD(+)</name>
        <dbReference type="ChEBI" id="CHEBI:57540"/>
    </ligand>
</feature>
<feature type="binding site" evidence="1">
    <location>
        <begin position="83"/>
        <end position="84"/>
    </location>
    <ligand>
        <name>NAD(+)</name>
        <dbReference type="ChEBI" id="CHEBI:57540"/>
    </ligand>
</feature>
<feature type="binding site" evidence="1">
    <location>
        <position position="114"/>
    </location>
    <ligand>
        <name>NAD(+)</name>
        <dbReference type="ChEBI" id="CHEBI:57540"/>
    </ligand>
</feature>
<feature type="binding site" evidence="1">
    <location>
        <position position="137"/>
    </location>
    <ligand>
        <name>NAD(+)</name>
        <dbReference type="ChEBI" id="CHEBI:57540"/>
    </ligand>
</feature>
<feature type="binding site" evidence="1">
    <location>
        <position position="171"/>
    </location>
    <ligand>
        <name>NAD(+)</name>
        <dbReference type="ChEBI" id="CHEBI:57540"/>
    </ligand>
</feature>
<feature type="binding site" evidence="1">
    <location>
        <position position="287"/>
    </location>
    <ligand>
        <name>NAD(+)</name>
        <dbReference type="ChEBI" id="CHEBI:57540"/>
    </ligand>
</feature>
<feature type="binding site" evidence="1">
    <location>
        <position position="311"/>
    </location>
    <ligand>
        <name>NAD(+)</name>
        <dbReference type="ChEBI" id="CHEBI:57540"/>
    </ligand>
</feature>
<feature type="binding site" evidence="1">
    <location>
        <position position="405"/>
    </location>
    <ligand>
        <name>Zn(2+)</name>
        <dbReference type="ChEBI" id="CHEBI:29105"/>
    </ligand>
</feature>
<feature type="binding site" evidence="1">
    <location>
        <position position="408"/>
    </location>
    <ligand>
        <name>Zn(2+)</name>
        <dbReference type="ChEBI" id="CHEBI:29105"/>
    </ligand>
</feature>
<feature type="binding site" evidence="1">
    <location>
        <position position="423"/>
    </location>
    <ligand>
        <name>Zn(2+)</name>
        <dbReference type="ChEBI" id="CHEBI:29105"/>
    </ligand>
</feature>
<feature type="binding site" evidence="1">
    <location>
        <position position="428"/>
    </location>
    <ligand>
        <name>Zn(2+)</name>
        <dbReference type="ChEBI" id="CHEBI:29105"/>
    </ligand>
</feature>
<gene>
    <name evidence="1" type="primary">ligA</name>
    <name type="ordered locus">BCAH187_A0378</name>
</gene>
<keyword id="KW-0227">DNA damage</keyword>
<keyword id="KW-0234">DNA repair</keyword>
<keyword id="KW-0235">DNA replication</keyword>
<keyword id="KW-0436">Ligase</keyword>
<keyword id="KW-0460">Magnesium</keyword>
<keyword id="KW-0464">Manganese</keyword>
<keyword id="KW-0479">Metal-binding</keyword>
<keyword id="KW-0520">NAD</keyword>
<keyword id="KW-0862">Zinc</keyword>